<sequence>MSVLDALWEDRDVRFDLSAQQMKTRPGEVLIDCLDSIEDTKGNNGDRGRLLVTNLRILWHSLALSRVNVSVGYNCILNITTRTANSKLRGQTEALYILTKCNSTRFEFIFTNLVPGSPRLFTSVMAVHRAYETSKMYRDFKLRSALIQNKQLRLLPQEHVYDKINGVWNLSSDQGNLGTFFITNVRIVWHANMNDSFNVSIPYLQIRSIKIRDSKFGLALVIESSQQSGGYVLGFKIDPVEKLQESVKEINSLHKVYSASPIFGVDYEMEEKPQPLEALTVEQIQDDVEIDSDGHTDAFVAYFADGNKQQDREPVFSEELGLAIEKLKDGFTLQGLWEVMS</sequence>
<organism>
    <name type="scientific">Homo sapiens</name>
    <name type="common">Human</name>
    <dbReference type="NCBI Taxonomy" id="9606"/>
    <lineage>
        <taxon>Eukaryota</taxon>
        <taxon>Metazoa</taxon>
        <taxon>Chordata</taxon>
        <taxon>Craniata</taxon>
        <taxon>Vertebrata</taxon>
        <taxon>Euteleostomi</taxon>
        <taxon>Mammalia</taxon>
        <taxon>Eutheria</taxon>
        <taxon>Euarchontoglires</taxon>
        <taxon>Primates</taxon>
        <taxon>Haplorrhini</taxon>
        <taxon>Catarrhini</taxon>
        <taxon>Hominidae</taxon>
        <taxon>Homo</taxon>
    </lineage>
</organism>
<dbReference type="EMBL" id="AY604003">
    <property type="protein sequence ID" value="AAT08182.1"/>
    <property type="molecule type" value="mRNA"/>
</dbReference>
<dbReference type="EMBL" id="AY604004">
    <property type="protein sequence ID" value="AAT08183.1"/>
    <property type="molecule type" value="mRNA"/>
</dbReference>
<dbReference type="EMBL" id="AL834305">
    <property type="protein sequence ID" value="CAD38975.1"/>
    <property type="molecule type" value="mRNA"/>
</dbReference>
<dbReference type="EMBL" id="AC093899">
    <property type="protein sequence ID" value="AAY24116.1"/>
    <property type="molecule type" value="Genomic_DNA"/>
</dbReference>
<dbReference type="EMBL" id="CH471058">
    <property type="protein sequence ID" value="EAX11276.1"/>
    <property type="molecule type" value="Genomic_DNA"/>
</dbReference>
<dbReference type="EMBL" id="CH471058">
    <property type="protein sequence ID" value="EAX11279.1"/>
    <property type="molecule type" value="Genomic_DNA"/>
</dbReference>
<dbReference type="EMBL" id="BC044593">
    <property type="protein sequence ID" value="AAH44593.1"/>
    <property type="molecule type" value="mRNA"/>
</dbReference>
<dbReference type="CCDS" id="CCDS2233.1">
    <molecule id="Q8N3I7-1"/>
</dbReference>
<dbReference type="RefSeq" id="NP_689597.1">
    <molecule id="Q8N3I7-1"/>
    <property type="nucleotide sequence ID" value="NM_152384.3"/>
</dbReference>
<dbReference type="PDB" id="6XTB">
    <property type="method" value="EM"/>
    <property type="resolution" value="4.30 A"/>
    <property type="chains" value="E=1-341"/>
</dbReference>
<dbReference type="PDBsum" id="6XTB"/>
<dbReference type="EMDB" id="EMD-10618"/>
<dbReference type="SMR" id="Q8N3I7"/>
<dbReference type="BioGRID" id="126215">
    <property type="interactions" value="20"/>
</dbReference>
<dbReference type="ComplexPortal" id="CPX-1908">
    <property type="entry name" value="BBSome complex"/>
</dbReference>
<dbReference type="CORUM" id="Q8N3I7"/>
<dbReference type="DIP" id="DIP-60357N"/>
<dbReference type="FunCoup" id="Q8N3I7">
    <property type="interactions" value="189"/>
</dbReference>
<dbReference type="IntAct" id="Q8N3I7">
    <property type="interactions" value="21"/>
</dbReference>
<dbReference type="STRING" id="9606.ENSP00000295240"/>
<dbReference type="TCDB" id="3.A.33.1.1">
    <property type="family name" value="the bbsome complex (bbsome) family"/>
</dbReference>
<dbReference type="iPTMnet" id="Q8N3I7"/>
<dbReference type="PhosphoSitePlus" id="Q8N3I7"/>
<dbReference type="BioMuta" id="BBS5"/>
<dbReference type="DMDM" id="74750959"/>
<dbReference type="jPOST" id="Q8N3I7"/>
<dbReference type="MassIVE" id="Q8N3I7"/>
<dbReference type="PaxDb" id="9606-ENSP00000295240"/>
<dbReference type="PeptideAtlas" id="Q8N3I7"/>
<dbReference type="ProteomicsDB" id="71805">
    <molecule id="Q8N3I7-1"/>
</dbReference>
<dbReference type="ProteomicsDB" id="71806">
    <molecule id="Q8N3I7-2"/>
</dbReference>
<dbReference type="Pumba" id="Q8N3I7"/>
<dbReference type="ABCD" id="Q8N3I7">
    <property type="antibodies" value="1 sequenced antibody"/>
</dbReference>
<dbReference type="Antibodypedia" id="35007">
    <property type="antibodies" value="130 antibodies from 26 providers"/>
</dbReference>
<dbReference type="DNASU" id="129880"/>
<dbReference type="Ensembl" id="ENST00000295240.8">
    <molecule id="Q8N3I7-1"/>
    <property type="protein sequence ID" value="ENSP00000295240.3"/>
    <property type="gene ID" value="ENSG00000163093.12"/>
</dbReference>
<dbReference type="Ensembl" id="ENST00000392663.6">
    <molecule id="Q8N3I7-2"/>
    <property type="protein sequence ID" value="ENSP00000376431.2"/>
    <property type="gene ID" value="ENSG00000163093.12"/>
</dbReference>
<dbReference type="GeneID" id="129880"/>
<dbReference type="KEGG" id="hsa:129880"/>
<dbReference type="MANE-Select" id="ENST00000295240.8">
    <property type="protein sequence ID" value="ENSP00000295240.3"/>
    <property type="RefSeq nucleotide sequence ID" value="NM_152384.3"/>
    <property type="RefSeq protein sequence ID" value="NP_689597.1"/>
</dbReference>
<dbReference type="UCSC" id="uc002uet.4">
    <molecule id="Q8N3I7-1"/>
    <property type="organism name" value="human"/>
</dbReference>
<dbReference type="AGR" id="HGNC:970"/>
<dbReference type="CTD" id="129880"/>
<dbReference type="DisGeNET" id="129880"/>
<dbReference type="GeneCards" id="BBS5"/>
<dbReference type="GeneReviews" id="BBS5"/>
<dbReference type="HGNC" id="HGNC:970">
    <property type="gene designation" value="BBS5"/>
</dbReference>
<dbReference type="HPA" id="ENSG00000163093">
    <property type="expression patterns" value="Low tissue specificity"/>
</dbReference>
<dbReference type="MalaCards" id="BBS5"/>
<dbReference type="MIM" id="603650">
    <property type="type" value="gene"/>
</dbReference>
<dbReference type="MIM" id="615983">
    <property type="type" value="phenotype"/>
</dbReference>
<dbReference type="neXtProt" id="NX_Q8N3I7"/>
<dbReference type="OpenTargets" id="ENSG00000163093"/>
<dbReference type="Orphanet" id="110">
    <property type="disease" value="Bardet-Biedl syndrome"/>
</dbReference>
<dbReference type="PharmGKB" id="PA25279"/>
<dbReference type="VEuPathDB" id="HostDB:ENSG00000163093"/>
<dbReference type="eggNOG" id="ENOG502QR2Z">
    <property type="taxonomic scope" value="Eukaryota"/>
</dbReference>
<dbReference type="GeneTree" id="ENSGT00390000002753"/>
<dbReference type="HOGENOM" id="CLU_052113_0_0_1"/>
<dbReference type="InParanoid" id="Q8N3I7"/>
<dbReference type="OMA" id="PNFGIQY"/>
<dbReference type="OrthoDB" id="10261999at2759"/>
<dbReference type="PAN-GO" id="Q8N3I7">
    <property type="GO annotations" value="5 GO annotations based on evolutionary models"/>
</dbReference>
<dbReference type="PhylomeDB" id="Q8N3I7"/>
<dbReference type="TreeFam" id="TF106129"/>
<dbReference type="PathwayCommons" id="Q8N3I7"/>
<dbReference type="Reactome" id="R-HSA-5620922">
    <property type="pathway name" value="BBSome-mediated cargo-targeting to cilium"/>
</dbReference>
<dbReference type="SignaLink" id="Q8N3I7"/>
<dbReference type="SIGNOR" id="Q8N3I7"/>
<dbReference type="BioGRID-ORCS" id="129880">
    <property type="hits" value="22 hits in 1117 CRISPR screens"/>
</dbReference>
<dbReference type="CD-CODE" id="8C2F96ED">
    <property type="entry name" value="Centrosome"/>
</dbReference>
<dbReference type="ChiTaRS" id="BBS5">
    <property type="organism name" value="human"/>
</dbReference>
<dbReference type="GeneWiki" id="BBS5"/>
<dbReference type="GenomeRNAi" id="129880"/>
<dbReference type="Pharos" id="Q8N3I7">
    <property type="development level" value="Tbio"/>
</dbReference>
<dbReference type="PRO" id="PR:Q8N3I7"/>
<dbReference type="Proteomes" id="UP000005640">
    <property type="component" value="Chromosome 2"/>
</dbReference>
<dbReference type="RNAct" id="Q8N3I7">
    <property type="molecule type" value="protein"/>
</dbReference>
<dbReference type="Bgee" id="ENSG00000163093">
    <property type="expression patterns" value="Expressed in right uterine tube and 104 other cell types or tissues"/>
</dbReference>
<dbReference type="ExpressionAtlas" id="Q8N3I7">
    <property type="expression patterns" value="baseline and differential"/>
</dbReference>
<dbReference type="GO" id="GO:0005930">
    <property type="term" value="C:axoneme"/>
    <property type="evidence" value="ECO:0007669"/>
    <property type="project" value="Ensembl"/>
</dbReference>
<dbReference type="GO" id="GO:0034464">
    <property type="term" value="C:BBSome"/>
    <property type="evidence" value="ECO:0000314"/>
    <property type="project" value="UniProtKB"/>
</dbReference>
<dbReference type="GO" id="GO:0034451">
    <property type="term" value="C:centriolar satellite"/>
    <property type="evidence" value="ECO:0007669"/>
    <property type="project" value="UniProtKB-SubCell"/>
</dbReference>
<dbReference type="GO" id="GO:0036064">
    <property type="term" value="C:ciliary basal body"/>
    <property type="evidence" value="ECO:0000250"/>
    <property type="project" value="BHF-UCL"/>
</dbReference>
<dbReference type="GO" id="GO:0060170">
    <property type="term" value="C:ciliary membrane"/>
    <property type="evidence" value="ECO:0000314"/>
    <property type="project" value="ComplexPortal"/>
</dbReference>
<dbReference type="GO" id="GO:0005829">
    <property type="term" value="C:cytosol"/>
    <property type="evidence" value="ECO:0000304"/>
    <property type="project" value="Reactome"/>
</dbReference>
<dbReference type="GO" id="GO:0032266">
    <property type="term" value="F:phosphatidylinositol-3-phosphate binding"/>
    <property type="evidence" value="ECO:0000314"/>
    <property type="project" value="BHF-UCL"/>
</dbReference>
<dbReference type="GO" id="GO:0061629">
    <property type="term" value="F:RNA polymerase II-specific DNA-binding transcription factor binding"/>
    <property type="evidence" value="ECO:0000353"/>
    <property type="project" value="MGI"/>
</dbReference>
<dbReference type="GO" id="GO:0060271">
    <property type="term" value="P:cilium assembly"/>
    <property type="evidence" value="ECO:0000315"/>
    <property type="project" value="BHF-UCL"/>
</dbReference>
<dbReference type="GO" id="GO:0001947">
    <property type="term" value="P:heart looping"/>
    <property type="evidence" value="ECO:0000250"/>
    <property type="project" value="BHF-UCL"/>
</dbReference>
<dbReference type="GO" id="GO:0046907">
    <property type="term" value="P:intracellular transport"/>
    <property type="evidence" value="ECO:0000318"/>
    <property type="project" value="GO_Central"/>
</dbReference>
<dbReference type="GO" id="GO:0032402">
    <property type="term" value="P:melanosome transport"/>
    <property type="evidence" value="ECO:0000250"/>
    <property type="project" value="BHF-UCL"/>
</dbReference>
<dbReference type="GO" id="GO:0044458">
    <property type="term" value="P:motile cilium assembly"/>
    <property type="evidence" value="ECO:0000250"/>
    <property type="project" value="BHF-UCL"/>
</dbReference>
<dbReference type="GO" id="GO:0015031">
    <property type="term" value="P:protein transport"/>
    <property type="evidence" value="ECO:0007669"/>
    <property type="project" value="UniProtKB-KW"/>
</dbReference>
<dbReference type="GO" id="GO:0007601">
    <property type="term" value="P:visual perception"/>
    <property type="evidence" value="ECO:0007669"/>
    <property type="project" value="UniProtKB-KW"/>
</dbReference>
<dbReference type="CDD" id="cd00900">
    <property type="entry name" value="PH-like"/>
    <property type="match status" value="1"/>
</dbReference>
<dbReference type="FunFam" id="2.30.29.30:FF:000232">
    <property type="entry name" value="Bardet-Biedl syndrome 5 isoform 1"/>
    <property type="match status" value="1"/>
</dbReference>
<dbReference type="Gene3D" id="2.30.29.30">
    <property type="entry name" value="Pleckstrin-homology domain (PH domain)/Phosphotyrosine-binding domain (PTB)"/>
    <property type="match status" value="1"/>
</dbReference>
<dbReference type="InterPro" id="IPR006606">
    <property type="entry name" value="BBL5"/>
</dbReference>
<dbReference type="InterPro" id="IPR030804">
    <property type="entry name" value="BBS5/fem-3"/>
</dbReference>
<dbReference type="InterPro" id="IPR014003">
    <property type="entry name" value="BBS5_PH"/>
</dbReference>
<dbReference type="InterPro" id="IPR011993">
    <property type="entry name" value="PH-like_dom_sf"/>
</dbReference>
<dbReference type="PANTHER" id="PTHR21351:SF0">
    <property type="entry name" value="BARDET-BIEDL SYNDROME 5 PROTEIN"/>
    <property type="match status" value="1"/>
</dbReference>
<dbReference type="PANTHER" id="PTHR21351">
    <property type="entry name" value="BARDET-BIEDL SYNDROME PROTEIN 5"/>
    <property type="match status" value="1"/>
</dbReference>
<dbReference type="Pfam" id="PF07289">
    <property type="entry name" value="BBL5"/>
    <property type="match status" value="1"/>
</dbReference>
<dbReference type="PIRSF" id="PIRSF010072">
    <property type="entry name" value="DUF1448"/>
    <property type="match status" value="1"/>
</dbReference>
<dbReference type="SMART" id="SM00683">
    <property type="entry name" value="DM16"/>
    <property type="match status" value="2"/>
</dbReference>
<gene>
    <name type="primary">BBS5</name>
</gene>
<comment type="function">
    <text evidence="4 7">The BBSome complex is thought to function as a coat complex required for sorting of specific membrane proteins to the primary cilia. The BBSome complex is required for ciliogenesis but is dispensable for centriolar satellite function. This ciliogenic function is mediated in part by the Rab8 GDP/GTP exchange factor, which localizes to the basal body and contacts the BBSome. Rab8(GTP) enters the primary cilium and promotes extension of the ciliary membrane. Firstly the BBSome associates with the ciliary membrane and binds to RAB3IP/Rabin8, the guanosyl exchange factor (GEF) for Rab8 and then the Rab8-GTP localizes to the cilium and promotes docking and fusion of carrier vesicles to the base of the ciliary membrane. The BBSome complex, together with the LTZL1, controls SMO ciliary trafficking and contributes to the sonic hedgehog (SHH) pathway regulation. Required for BBSome complex ciliary localization but not for the proper complex assembly.</text>
</comment>
<comment type="subunit">
    <text evidence="3 4 7 8 9">Part of BBSome complex, that contains BBS1, BBS2, BBS4, BBS5, BBS7, BBS8/TTC8, BBS9 and BBIP10. Binds to phosphoinositides. Interacts with CCDC28B. Interacts with SMO; the interaction is indicative for the association of SMO with the BBsome complex to facilitate ciliary localization of SMO. Interacts with PKD1 (PubMed:24939912). Interacts with DLEC1 (PubMed:33144677).</text>
</comment>
<comment type="interaction">
    <interactant intactId="EBI-2892592">
        <id>Q8N3I7</id>
    </interactant>
    <interactant intactId="EBI-2826852">
        <id>Q3SYG4</id>
        <label>BBS9</label>
    </interactant>
    <organismsDiffer>false</organismsDiffer>
    <experiments>9</experiments>
</comment>
<comment type="interaction">
    <interactant intactId="EBI-2892592">
        <id>Q8N3I7</id>
    </interactant>
    <interactant intactId="EBI-520375">
        <id>P78560</id>
        <label>CRADD</label>
    </interactant>
    <organismsDiffer>false</organismsDiffer>
    <experiments>3</experiments>
</comment>
<comment type="interaction">
    <interactant intactId="EBI-2892592">
        <id>Q8N3I7</id>
    </interactant>
    <interactant intactId="EBI-2805823">
        <id>Q15051</id>
        <label>IQCB1</label>
    </interactant>
    <organismsDiffer>false</organismsDiffer>
    <experiments>8</experiments>
</comment>
<comment type="interaction">
    <interactant intactId="EBI-2892592">
        <id>Q8N3I7</id>
    </interactant>
    <interactant intactId="EBI-1643885">
        <id>Q6P597</id>
        <label>KLC3</label>
    </interactant>
    <organismsDiffer>false</organismsDiffer>
    <experiments>3</experiments>
</comment>
<comment type="subcellular location">
    <subcellularLocation>
        <location>Cell projection</location>
        <location>Cilium membrane</location>
    </subcellularLocation>
    <subcellularLocation>
        <location>Cytoplasm</location>
    </subcellularLocation>
    <subcellularLocation>
        <location evidence="1">Cytoplasm</location>
        <location evidence="1">Cytoskeleton</location>
        <location evidence="1">Cilium basal body</location>
    </subcellularLocation>
    <subcellularLocation>
        <location>Cytoplasm</location>
        <location>Cytoskeleton</location>
        <location>Microtubule organizing center</location>
        <location>Centrosome</location>
        <location>Centriolar satellite</location>
    </subcellularLocation>
    <text evidence="1">Localizes to basal bodies.</text>
</comment>
<comment type="alternative products">
    <event type="alternative splicing"/>
    <isoform>
        <id>Q8N3I7-1</id>
        <name>1</name>
        <sequence type="displayed"/>
    </isoform>
    <isoform>
        <id>Q8N3I7-2</id>
        <name>2</name>
        <sequence type="described" ref="VSP_017240"/>
    </isoform>
</comment>
<comment type="disease" evidence="2 5 6">
    <disease id="DI-00163">
        <name>Bardet-Biedl syndrome 5</name>
        <acronym>BBS5</acronym>
        <description>A syndrome characterized by usually severe pigmentary retinopathy, early-onset obesity, polydactyly, hypogenitalism, renal malformation and intellectual disability. Secondary features include diabetes mellitus, hypertension and congenital heart disease. Bardet-Biedl syndrome inheritance is autosomal recessive, but three mutated alleles (two at one locus, and a third at a second locus) may be required for clinical manifestation of some forms of the disease.</description>
        <dbReference type="MIM" id="615983"/>
    </disease>
    <text>The disease is caused by variants affecting the gene represented in this entry.</text>
</comment>
<comment type="miscellaneous">
    <text>BBS5 may interact genetically with BBS1.</text>
</comment>
<comment type="similarity">
    <text evidence="11">Belongs to the BBS5 family.</text>
</comment>
<evidence type="ECO:0000250" key="1"/>
<evidence type="ECO:0000269" key="2">
    <source>
    </source>
</evidence>
<evidence type="ECO:0000269" key="3">
    <source>
    </source>
</evidence>
<evidence type="ECO:0000269" key="4">
    <source>
    </source>
</evidence>
<evidence type="ECO:0000269" key="5">
    <source>
    </source>
</evidence>
<evidence type="ECO:0000269" key="6">
    <source>
    </source>
</evidence>
<evidence type="ECO:0000269" key="7">
    <source>
    </source>
</evidence>
<evidence type="ECO:0000269" key="8">
    <source>
    </source>
</evidence>
<evidence type="ECO:0000269" key="9">
    <source>
    </source>
</evidence>
<evidence type="ECO:0000303" key="10">
    <source>
    </source>
</evidence>
<evidence type="ECO:0000305" key="11"/>
<name>BBS5_HUMAN</name>
<protein>
    <recommendedName>
        <fullName evidence="11">BBSome complex member BBS5</fullName>
    </recommendedName>
    <alternativeName>
        <fullName>Bardet-Biedl syndrome 5 protein</fullName>
    </alternativeName>
</protein>
<accession>Q8N3I7</accession>
<accession>D3DPC3</accession>
<accession>Q6PKN0</accession>
<keyword id="KW-0002">3D-structure</keyword>
<keyword id="KW-0025">Alternative splicing</keyword>
<keyword id="KW-0083">Bardet-Biedl syndrome</keyword>
<keyword id="KW-1003">Cell membrane</keyword>
<keyword id="KW-0966">Cell projection</keyword>
<keyword id="KW-1186">Ciliopathy</keyword>
<keyword id="KW-0969">Cilium</keyword>
<keyword id="KW-0970">Cilium biogenesis/degradation</keyword>
<keyword id="KW-0963">Cytoplasm</keyword>
<keyword id="KW-0206">Cytoskeleton</keyword>
<keyword id="KW-0225">Disease variant</keyword>
<keyword id="KW-0991">Intellectual disability</keyword>
<keyword id="KW-0472">Membrane</keyword>
<keyword id="KW-0550">Obesity</keyword>
<keyword id="KW-0653">Protein transport</keyword>
<keyword id="KW-1267">Proteomics identification</keyword>
<keyword id="KW-1185">Reference proteome</keyword>
<keyword id="KW-0716">Sensory transduction</keyword>
<keyword id="KW-0813">Transport</keyword>
<keyword id="KW-0844">Vision</keyword>
<proteinExistence type="evidence at protein level"/>
<feature type="chain" id="PRO_0000223254" description="BBSome complex member BBS5">
    <location>
        <begin position="1"/>
        <end position="341"/>
    </location>
</feature>
<feature type="splice variant" id="VSP_017240" description="In isoform 2." evidence="10">
    <location>
        <begin position="207"/>
        <end position="227"/>
    </location>
</feature>
<feature type="sequence variant" id="VAR_066290" description="In BBS5; dbSNP:rs121908581." evidence="5 6">
    <original>G</original>
    <variation>S</variation>
    <location>
        <position position="72"/>
    </location>
</feature>
<feature type="sequence variant" id="VAR_072380" description="In BBS5; found in patient of Sri Lankan origin; not detected in patients of Northern European origin; dbSNP:rs121908582." evidence="5">
    <original>T</original>
    <variation>A</variation>
    <location>
        <position position="183"/>
    </location>
</feature>
<feature type="sequence variant" id="VAR_025316" description="Found in patients with Bardet-Biedl syndrome carrying homozygous mutations in other BBS genes; might have a modifying effect on disease phenotype; dbSNP:rs137853921." evidence="2 6">
    <original>N</original>
    <variation>S</variation>
    <location>
        <position position="184"/>
    </location>
</feature>
<feature type="sequence variant" id="VAR_025317" description="Found as heterozygous variant in patients with Bardet-Biedl syndrome; might have a modifying effect on disease phenotype; dbSNP:rs35487251." evidence="2">
    <original>R</original>
    <variation>H</variation>
    <location>
        <position position="207"/>
    </location>
</feature>
<feature type="sequence variant" id="VAR_066291" description="In dbSNP:rs143113298." evidence="6">
    <original>N</original>
    <variation>D</variation>
    <location>
        <position position="251"/>
    </location>
</feature>
<reference key="1">
    <citation type="journal article" date="2004" name="Cell">
        <title>Comparative genomics identifies a flagellar and basal body proteome that includes the BBS5 human disease gene.</title>
        <authorList>
            <person name="Li J.B."/>
            <person name="Gerdes J.M."/>
            <person name="Haycraft C.J."/>
            <person name="Fan Y."/>
            <person name="Teslovich T.M."/>
            <person name="May-Simera H."/>
            <person name="Li H."/>
            <person name="Blacque O.E."/>
            <person name="Li L."/>
            <person name="Leitch C.C."/>
            <person name="Lewis R.A."/>
            <person name="Green J.S."/>
            <person name="Parfrey P.S."/>
            <person name="Leroux M.R."/>
            <person name="Davidson W.S."/>
            <person name="Beales P.L."/>
            <person name="Guay-Woodford L.M."/>
            <person name="Yoder B.K."/>
            <person name="Stormo G.D."/>
            <person name="Katsanis N."/>
            <person name="Dutcher S.K."/>
        </authorList>
    </citation>
    <scope>NUCLEOTIDE SEQUENCE [MRNA] (ISOFORMS 1 AND 2)</scope>
    <scope>INVOLVEMENT IN BBS5</scope>
    <scope>VARIANTS SER-184 AND HIS-207</scope>
</reference>
<reference key="2">
    <citation type="journal article" date="2007" name="BMC Genomics">
        <title>The full-ORF clone resource of the German cDNA consortium.</title>
        <authorList>
            <person name="Bechtel S."/>
            <person name="Rosenfelder H."/>
            <person name="Duda A."/>
            <person name="Schmidt C.P."/>
            <person name="Ernst U."/>
            <person name="Wellenreuther R."/>
            <person name="Mehrle A."/>
            <person name="Schuster C."/>
            <person name="Bahr A."/>
            <person name="Bloecker H."/>
            <person name="Heubner D."/>
            <person name="Hoerlein A."/>
            <person name="Michel G."/>
            <person name="Wedler H."/>
            <person name="Koehrer K."/>
            <person name="Ottenwaelder B."/>
            <person name="Poustka A."/>
            <person name="Wiemann S."/>
            <person name="Schupp I."/>
        </authorList>
    </citation>
    <scope>NUCLEOTIDE SEQUENCE [LARGE SCALE MRNA] (ISOFORM 1)</scope>
    <source>
        <tissue>Melanoma</tissue>
    </source>
</reference>
<reference key="3">
    <citation type="journal article" date="2005" name="Nature">
        <title>Generation and annotation of the DNA sequences of human chromosomes 2 and 4.</title>
        <authorList>
            <person name="Hillier L.W."/>
            <person name="Graves T.A."/>
            <person name="Fulton R.S."/>
            <person name="Fulton L.A."/>
            <person name="Pepin K.H."/>
            <person name="Minx P."/>
            <person name="Wagner-McPherson C."/>
            <person name="Layman D."/>
            <person name="Wylie K."/>
            <person name="Sekhon M."/>
            <person name="Becker M.C."/>
            <person name="Fewell G.A."/>
            <person name="Delehaunty K.D."/>
            <person name="Miner T.L."/>
            <person name="Nash W.E."/>
            <person name="Kremitzki C."/>
            <person name="Oddy L."/>
            <person name="Du H."/>
            <person name="Sun H."/>
            <person name="Bradshaw-Cordum H."/>
            <person name="Ali J."/>
            <person name="Carter J."/>
            <person name="Cordes M."/>
            <person name="Harris A."/>
            <person name="Isak A."/>
            <person name="van Brunt A."/>
            <person name="Nguyen C."/>
            <person name="Du F."/>
            <person name="Courtney L."/>
            <person name="Kalicki J."/>
            <person name="Ozersky P."/>
            <person name="Abbott S."/>
            <person name="Armstrong J."/>
            <person name="Belter E.A."/>
            <person name="Caruso L."/>
            <person name="Cedroni M."/>
            <person name="Cotton M."/>
            <person name="Davidson T."/>
            <person name="Desai A."/>
            <person name="Elliott G."/>
            <person name="Erb T."/>
            <person name="Fronick C."/>
            <person name="Gaige T."/>
            <person name="Haakenson W."/>
            <person name="Haglund K."/>
            <person name="Holmes A."/>
            <person name="Harkins R."/>
            <person name="Kim K."/>
            <person name="Kruchowski S.S."/>
            <person name="Strong C.M."/>
            <person name="Grewal N."/>
            <person name="Goyea E."/>
            <person name="Hou S."/>
            <person name="Levy A."/>
            <person name="Martinka S."/>
            <person name="Mead K."/>
            <person name="McLellan M.D."/>
            <person name="Meyer R."/>
            <person name="Randall-Maher J."/>
            <person name="Tomlinson C."/>
            <person name="Dauphin-Kohlberg S."/>
            <person name="Kozlowicz-Reilly A."/>
            <person name="Shah N."/>
            <person name="Swearengen-Shahid S."/>
            <person name="Snider J."/>
            <person name="Strong J.T."/>
            <person name="Thompson J."/>
            <person name="Yoakum M."/>
            <person name="Leonard S."/>
            <person name="Pearman C."/>
            <person name="Trani L."/>
            <person name="Radionenko M."/>
            <person name="Waligorski J.E."/>
            <person name="Wang C."/>
            <person name="Rock S.M."/>
            <person name="Tin-Wollam A.-M."/>
            <person name="Maupin R."/>
            <person name="Latreille P."/>
            <person name="Wendl M.C."/>
            <person name="Yang S.-P."/>
            <person name="Pohl C."/>
            <person name="Wallis J.W."/>
            <person name="Spieth J."/>
            <person name="Bieri T.A."/>
            <person name="Berkowicz N."/>
            <person name="Nelson J.O."/>
            <person name="Osborne J."/>
            <person name="Ding L."/>
            <person name="Meyer R."/>
            <person name="Sabo A."/>
            <person name="Shotland Y."/>
            <person name="Sinha P."/>
            <person name="Wohldmann P.E."/>
            <person name="Cook L.L."/>
            <person name="Hickenbotham M.T."/>
            <person name="Eldred J."/>
            <person name="Williams D."/>
            <person name="Jones T.A."/>
            <person name="She X."/>
            <person name="Ciccarelli F.D."/>
            <person name="Izaurralde E."/>
            <person name="Taylor J."/>
            <person name="Schmutz J."/>
            <person name="Myers R.M."/>
            <person name="Cox D.R."/>
            <person name="Huang X."/>
            <person name="McPherson J.D."/>
            <person name="Mardis E.R."/>
            <person name="Clifton S.W."/>
            <person name="Warren W.C."/>
            <person name="Chinwalla A.T."/>
            <person name="Eddy S.R."/>
            <person name="Marra M.A."/>
            <person name="Ovcharenko I."/>
            <person name="Furey T.S."/>
            <person name="Miller W."/>
            <person name="Eichler E.E."/>
            <person name="Bork P."/>
            <person name="Suyama M."/>
            <person name="Torrents D."/>
            <person name="Waterston R.H."/>
            <person name="Wilson R.K."/>
        </authorList>
    </citation>
    <scope>NUCLEOTIDE SEQUENCE [LARGE SCALE GENOMIC DNA]</scope>
</reference>
<reference key="4">
    <citation type="submission" date="2005-09" db="EMBL/GenBank/DDBJ databases">
        <authorList>
            <person name="Mural R.J."/>
            <person name="Istrail S."/>
            <person name="Sutton G.G."/>
            <person name="Florea L."/>
            <person name="Halpern A.L."/>
            <person name="Mobarry C.M."/>
            <person name="Lippert R."/>
            <person name="Walenz B."/>
            <person name="Shatkay H."/>
            <person name="Dew I."/>
            <person name="Miller J.R."/>
            <person name="Flanigan M.J."/>
            <person name="Edwards N.J."/>
            <person name="Bolanos R."/>
            <person name="Fasulo D."/>
            <person name="Halldorsson B.V."/>
            <person name="Hannenhalli S."/>
            <person name="Turner R."/>
            <person name="Yooseph S."/>
            <person name="Lu F."/>
            <person name="Nusskern D.R."/>
            <person name="Shue B.C."/>
            <person name="Zheng X.H."/>
            <person name="Zhong F."/>
            <person name="Delcher A.L."/>
            <person name="Huson D.H."/>
            <person name="Kravitz S.A."/>
            <person name="Mouchard L."/>
            <person name="Reinert K."/>
            <person name="Remington K.A."/>
            <person name="Clark A.G."/>
            <person name="Waterman M.S."/>
            <person name="Eichler E.E."/>
            <person name="Adams M.D."/>
            <person name="Hunkapiller M.W."/>
            <person name="Myers E.W."/>
            <person name="Venter J.C."/>
        </authorList>
    </citation>
    <scope>NUCLEOTIDE SEQUENCE [LARGE SCALE GENOMIC DNA]</scope>
</reference>
<reference key="5">
    <citation type="journal article" date="2004" name="Genome Res.">
        <title>The status, quality, and expansion of the NIH full-length cDNA project: the Mammalian Gene Collection (MGC).</title>
        <authorList>
            <consortium name="The MGC Project Team"/>
        </authorList>
    </citation>
    <scope>NUCLEOTIDE SEQUENCE [LARGE SCALE MRNA] (ISOFORM 1)</scope>
    <source>
        <tissue>Testis</tissue>
    </source>
</reference>
<reference key="6">
    <citation type="journal article" date="2006" name="Nature">
        <title>Dissection of epistasis in oligogenic Bardet-Biedl syndrome.</title>
        <authorList>
            <person name="Badano J.L."/>
            <person name="Leitch C.C."/>
            <person name="Ansley S.J."/>
            <person name="May-Simera H."/>
            <person name="Lawson S."/>
            <person name="Lewis R.A."/>
            <person name="Beales P.L."/>
            <person name="Dietz H.C."/>
            <person name="Fisher S."/>
            <person name="Katsanis N."/>
        </authorList>
    </citation>
    <scope>INTERACTION WITH CCDC28B</scope>
</reference>
<reference key="7">
    <citation type="journal article" date="2007" name="Cell">
        <title>A core complex of BBS proteins cooperates with the GTPase Rab8 to promote ciliary membrane biogenesis.</title>
        <authorList>
            <person name="Nachury M.V."/>
            <person name="Loktev A.V."/>
            <person name="Zhang Q."/>
            <person name="Westlake C.J."/>
            <person name="Peraenen J."/>
            <person name="Merdes A."/>
            <person name="Slusarski D.C."/>
            <person name="Scheller R.H."/>
            <person name="Bazan J.F."/>
            <person name="Sheffield V.C."/>
            <person name="Jackson P.K."/>
        </authorList>
    </citation>
    <scope>IDENTIFICATION BY MASS SPECTROMETRY</scope>
    <scope>SUBUNIT</scope>
    <scope>FUNCTION</scope>
    <scope>SUBCELLULAR LOCATION</scope>
    <scope>BINDING TO PHOSPHOINOSITIDES</scope>
</reference>
<reference key="8">
    <citation type="journal article" date="2011" name="PLoS Genet.">
        <title>A novel protein LZTFL1 regulates ciliary trafficking of the BBSome and Smoothened.</title>
        <authorList>
            <person name="Seo S."/>
            <person name="Zhang Q."/>
            <person name="Bugge K."/>
            <person name="Breslow D.K."/>
            <person name="Searby C.C."/>
            <person name="Nachury M.V."/>
            <person name="Sheffield V.C."/>
        </authorList>
    </citation>
    <scope>FUNCTION</scope>
    <scope>FUNCTION OF THE BBSOME COMPLEX</scope>
    <scope>IDENTIFICATION IN THE BBSOME COMPLEX</scope>
    <scope>INTERACTION WITH SMO</scope>
    <scope>SUBCELLULAR LOCATION</scope>
</reference>
<reference key="9">
    <citation type="journal article" date="2014" name="Hum. Mol. Genet.">
        <title>Bardet-Biedl syndrome proteins 1 and 3 regulate the ciliary trafficking of polycystic kidney disease 1 protein.</title>
        <authorList>
            <person name="Su X."/>
            <person name="Driscoll K."/>
            <person name="Yao G."/>
            <person name="Raed A."/>
            <person name="Wu M."/>
            <person name="Beales P.L."/>
            <person name="Zhou J."/>
        </authorList>
    </citation>
    <scope>INTERACTION WITH PKD1</scope>
</reference>
<reference key="10">
    <citation type="journal article" date="2020" name="Sci. Rep.">
        <title>Dlec1 is required for spermatogenesis and male fertility in mice.</title>
        <authorList>
            <person name="Okitsu Y."/>
            <person name="Nagano M."/>
            <person name="Yamagata T."/>
            <person name="Ito C."/>
            <person name="Toshimori K."/>
            <person name="Dohra H."/>
            <person name="Fujii W."/>
            <person name="Yogo K."/>
        </authorList>
    </citation>
    <scope>INTERACTION WITH DLEC1</scope>
</reference>
<reference key="11">
    <citation type="journal article" date="2008" name="Am. J. Med. Genet. A">
        <title>Novel mutations in BBS5 highlight the importance of this gene in non-Caucasian Bardet-Biedl syndrome patients.</title>
        <authorList>
            <person name="Hjortshoj T.D."/>
            <person name="Gronskov K."/>
            <person name="Philp A.R."/>
            <person name="Nishimura D.Y."/>
            <person name="Adeyemo A."/>
            <person name="Rotimi C.N."/>
            <person name="Sheffield V.C."/>
            <person name="Rosenberg T."/>
            <person name="Brondum-Nielsen K."/>
        </authorList>
    </citation>
    <scope>VARIANTS BBS5 SER-72 AND ALA-183</scope>
</reference>
<reference key="12">
    <citation type="journal article" date="2011" name="Hum. Mutat.">
        <title>BBS genotype-phenotype assessment of a multiethnic patient cohort calls for a revision of the disease definition.</title>
        <authorList>
            <person name="Deveault C."/>
            <person name="Billingsley G."/>
            <person name="Duncan J.L."/>
            <person name="Bin J."/>
            <person name="Theal R."/>
            <person name="Vincent A."/>
            <person name="Fieggen K.J."/>
            <person name="Gerth C."/>
            <person name="Noordeh N."/>
            <person name="Traboulsi E.I."/>
            <person name="Fishman G.A."/>
            <person name="Chitayat D."/>
            <person name="Knueppel T."/>
            <person name="Millan J.M."/>
            <person name="Munier F.L."/>
            <person name="Kennedy D."/>
            <person name="Jacobson S.G."/>
            <person name="Innes A.M."/>
            <person name="Mitchell G.A."/>
            <person name="Boycott K."/>
            <person name="Heon E."/>
        </authorList>
    </citation>
    <scope>VARIANT BBS5 SER-72</scope>
    <scope>VARIANTS SER-184 AND ASP-251</scope>
</reference>